<comment type="subcellular location">
    <subcellularLocation>
        <location evidence="1">Cell inner membrane</location>
        <topology evidence="1">Multi-pass membrane protein</topology>
    </subcellularLocation>
</comment>
<comment type="similarity">
    <text evidence="1">Belongs to the major facilitator superfamily. TsgA family.</text>
</comment>
<organism>
    <name type="scientific">Escherichia coli O139:H28 (strain E24377A / ETEC)</name>
    <dbReference type="NCBI Taxonomy" id="331111"/>
    <lineage>
        <taxon>Bacteria</taxon>
        <taxon>Pseudomonadati</taxon>
        <taxon>Pseudomonadota</taxon>
        <taxon>Gammaproteobacteria</taxon>
        <taxon>Enterobacterales</taxon>
        <taxon>Enterobacteriaceae</taxon>
        <taxon>Escherichia</taxon>
    </lineage>
</organism>
<feature type="chain" id="PRO_1000064245" description="Protein TsgA">
    <location>
        <begin position="1"/>
        <end position="393"/>
    </location>
</feature>
<feature type="transmembrane region" description="Helical" evidence="1">
    <location>
        <begin position="11"/>
        <end position="31"/>
    </location>
</feature>
<feature type="transmembrane region" description="Helical" evidence="1">
    <location>
        <begin position="51"/>
        <end position="71"/>
    </location>
</feature>
<feature type="transmembrane region" description="Helical" evidence="1">
    <location>
        <begin position="78"/>
        <end position="98"/>
    </location>
</feature>
<feature type="transmembrane region" description="Helical" evidence="1">
    <location>
        <begin position="101"/>
        <end position="121"/>
    </location>
</feature>
<feature type="transmembrane region" description="Helical" evidence="1">
    <location>
        <begin position="134"/>
        <end position="154"/>
    </location>
</feature>
<feature type="transmembrane region" description="Helical" evidence="1">
    <location>
        <begin position="162"/>
        <end position="182"/>
    </location>
</feature>
<feature type="transmembrane region" description="Helical" evidence="1">
    <location>
        <begin position="206"/>
        <end position="226"/>
    </location>
</feature>
<feature type="transmembrane region" description="Helical" evidence="1">
    <location>
        <begin position="245"/>
        <end position="265"/>
    </location>
</feature>
<feature type="transmembrane region" description="Helical" evidence="1">
    <location>
        <begin position="273"/>
        <end position="293"/>
    </location>
</feature>
<feature type="transmembrane region" description="Helical" evidence="1">
    <location>
        <begin position="297"/>
        <end position="317"/>
    </location>
</feature>
<feature type="transmembrane region" description="Helical" evidence="1">
    <location>
        <begin position="332"/>
        <end position="352"/>
    </location>
</feature>
<feature type="transmembrane region" description="Helical" evidence="1">
    <location>
        <begin position="361"/>
        <end position="381"/>
    </location>
</feature>
<reference key="1">
    <citation type="journal article" date="2008" name="J. Bacteriol.">
        <title>The pangenome structure of Escherichia coli: comparative genomic analysis of E. coli commensal and pathogenic isolates.</title>
        <authorList>
            <person name="Rasko D.A."/>
            <person name="Rosovitz M.J."/>
            <person name="Myers G.S.A."/>
            <person name="Mongodin E.F."/>
            <person name="Fricke W.F."/>
            <person name="Gajer P."/>
            <person name="Crabtree J."/>
            <person name="Sebaihia M."/>
            <person name="Thomson N.R."/>
            <person name="Chaudhuri R."/>
            <person name="Henderson I.R."/>
            <person name="Sperandio V."/>
            <person name="Ravel J."/>
        </authorList>
    </citation>
    <scope>NUCLEOTIDE SEQUENCE [LARGE SCALE GENOMIC DNA]</scope>
    <source>
        <strain>E24377A / ETEC</strain>
    </source>
</reference>
<proteinExistence type="inferred from homology"/>
<evidence type="ECO:0000255" key="1">
    <source>
        <dbReference type="HAMAP-Rule" id="MF_01044"/>
    </source>
</evidence>
<gene>
    <name evidence="1" type="primary">tsgA</name>
    <name type="ordered locus">EcE24377A_3833</name>
</gene>
<keyword id="KW-0997">Cell inner membrane</keyword>
<keyword id="KW-1003">Cell membrane</keyword>
<keyword id="KW-0472">Membrane</keyword>
<keyword id="KW-1185">Reference proteome</keyword>
<keyword id="KW-0812">Transmembrane</keyword>
<keyword id="KW-1133">Transmembrane helix</keyword>
<accession>A7ZSN9</accession>
<sequence>MTNSNRIKLTWISFLSYALTGALVIVTGMVMGNIADYFNLPVSSMSNTFTFLNAGILISIFLNAWLMEIVPLKTQLRFGFLLMVLAVAGLMFSHSLALFSAAMFILGVVSGITMSIGTFLVTQMYEGRQRGSRLLFTDSFFSMAGMIFPMIAAFLLARSIEWYWVYACIGLVYVAIFILTFGCEFPALGKHAPKTDAPVEKEKWGIGVLFLSVAALCYILGQLGFISWVPEYAKGLGMSLNDAGTLVSNFWMSYMVGMWAFSFILRFFDLQRILTVLAGLAAILMYVFNTGTPAHMAWSILALGFFSSAIYTTIITLGSQQTKVPSPKLVNFVLTCGTIGTMLTFVVTGPIVEHSGPQAALLTANGLYAVVFVMCFLLGFVSRHRQHNTLTSH</sequence>
<dbReference type="EMBL" id="CP000800">
    <property type="protein sequence ID" value="ABV17313.1"/>
    <property type="molecule type" value="Genomic_DNA"/>
</dbReference>
<dbReference type="RefSeq" id="WP_000185247.1">
    <property type="nucleotide sequence ID" value="NC_009801.1"/>
</dbReference>
<dbReference type="SMR" id="A7ZSN9"/>
<dbReference type="GeneID" id="75206308"/>
<dbReference type="KEGG" id="ecw:EcE24377A_3833"/>
<dbReference type="HOGENOM" id="CLU_056916_0_0_6"/>
<dbReference type="Proteomes" id="UP000001122">
    <property type="component" value="Chromosome"/>
</dbReference>
<dbReference type="GO" id="GO:0005886">
    <property type="term" value="C:plasma membrane"/>
    <property type="evidence" value="ECO:0007669"/>
    <property type="project" value="UniProtKB-SubCell"/>
</dbReference>
<dbReference type="GO" id="GO:0022857">
    <property type="term" value="F:transmembrane transporter activity"/>
    <property type="evidence" value="ECO:0007669"/>
    <property type="project" value="InterPro"/>
</dbReference>
<dbReference type="CDD" id="cd17333">
    <property type="entry name" value="MFS_FucP_MFSD4_like"/>
    <property type="match status" value="1"/>
</dbReference>
<dbReference type="FunFam" id="1.20.1250.20:FF:000032">
    <property type="entry name" value="Protein TsgA"/>
    <property type="match status" value="1"/>
</dbReference>
<dbReference type="FunFam" id="1.20.1250.20:FF:000052">
    <property type="entry name" value="Protein TsgA"/>
    <property type="match status" value="1"/>
</dbReference>
<dbReference type="Gene3D" id="1.20.1250.20">
    <property type="entry name" value="MFS general substrate transporter like domains"/>
    <property type="match status" value="2"/>
</dbReference>
<dbReference type="HAMAP" id="MF_01044">
    <property type="entry name" value="MFS_TsgA"/>
    <property type="match status" value="1"/>
</dbReference>
<dbReference type="InterPro" id="IPR011701">
    <property type="entry name" value="MFS"/>
</dbReference>
<dbReference type="InterPro" id="IPR020846">
    <property type="entry name" value="MFS_dom"/>
</dbReference>
<dbReference type="InterPro" id="IPR036259">
    <property type="entry name" value="MFS_trans_sf"/>
</dbReference>
<dbReference type="InterPro" id="IPR023528">
    <property type="entry name" value="MFS_TsgA"/>
</dbReference>
<dbReference type="InterPro" id="IPR050375">
    <property type="entry name" value="MFS_TsgA-like"/>
</dbReference>
<dbReference type="NCBIfam" id="NF002982">
    <property type="entry name" value="PRK03699.1"/>
    <property type="match status" value="1"/>
</dbReference>
<dbReference type="PANTHER" id="PTHR43702">
    <property type="entry name" value="L-FUCOSE-PROTON SYMPORTER"/>
    <property type="match status" value="1"/>
</dbReference>
<dbReference type="PANTHER" id="PTHR43702:SF3">
    <property type="entry name" value="PROTEIN TSGA"/>
    <property type="match status" value="1"/>
</dbReference>
<dbReference type="Pfam" id="PF07690">
    <property type="entry name" value="MFS_1"/>
    <property type="match status" value="1"/>
</dbReference>
<dbReference type="SUPFAM" id="SSF103473">
    <property type="entry name" value="MFS general substrate transporter"/>
    <property type="match status" value="1"/>
</dbReference>
<dbReference type="PROSITE" id="PS50850">
    <property type="entry name" value="MFS"/>
    <property type="match status" value="1"/>
</dbReference>
<protein>
    <recommendedName>
        <fullName evidence="1">Protein TsgA</fullName>
    </recommendedName>
</protein>
<name>TSGA_ECO24</name>